<name>EFTS_ROSDO</name>
<organism>
    <name type="scientific">Roseobacter denitrificans (strain ATCC 33942 / OCh 114)</name>
    <name type="common">Erythrobacter sp. (strain OCh 114)</name>
    <name type="synonym">Roseobacter denitrificans</name>
    <dbReference type="NCBI Taxonomy" id="375451"/>
    <lineage>
        <taxon>Bacteria</taxon>
        <taxon>Pseudomonadati</taxon>
        <taxon>Pseudomonadota</taxon>
        <taxon>Alphaproteobacteria</taxon>
        <taxon>Rhodobacterales</taxon>
        <taxon>Roseobacteraceae</taxon>
        <taxon>Roseobacter</taxon>
    </lineage>
</organism>
<dbReference type="EMBL" id="CP000362">
    <property type="protein sequence ID" value="ABG32199.1"/>
    <property type="molecule type" value="Genomic_DNA"/>
</dbReference>
<dbReference type="RefSeq" id="WP_011568816.1">
    <property type="nucleotide sequence ID" value="NC_008209.1"/>
</dbReference>
<dbReference type="SMR" id="Q165Z4"/>
<dbReference type="STRING" id="375451.RD1_2652"/>
<dbReference type="KEGG" id="rde:RD1_2652"/>
<dbReference type="eggNOG" id="COG0264">
    <property type="taxonomic scope" value="Bacteria"/>
</dbReference>
<dbReference type="HOGENOM" id="CLU_047155_0_2_5"/>
<dbReference type="OrthoDB" id="9808348at2"/>
<dbReference type="Proteomes" id="UP000007029">
    <property type="component" value="Chromosome"/>
</dbReference>
<dbReference type="GO" id="GO:0005737">
    <property type="term" value="C:cytoplasm"/>
    <property type="evidence" value="ECO:0007669"/>
    <property type="project" value="UniProtKB-SubCell"/>
</dbReference>
<dbReference type="GO" id="GO:0003746">
    <property type="term" value="F:translation elongation factor activity"/>
    <property type="evidence" value="ECO:0007669"/>
    <property type="project" value="UniProtKB-UniRule"/>
</dbReference>
<dbReference type="CDD" id="cd14275">
    <property type="entry name" value="UBA_EF-Ts"/>
    <property type="match status" value="1"/>
</dbReference>
<dbReference type="FunFam" id="1.10.286.20:FF:000001">
    <property type="entry name" value="Elongation factor Ts"/>
    <property type="match status" value="1"/>
</dbReference>
<dbReference type="FunFam" id="1.10.8.10:FF:000001">
    <property type="entry name" value="Elongation factor Ts"/>
    <property type="match status" value="1"/>
</dbReference>
<dbReference type="Gene3D" id="1.10.286.20">
    <property type="match status" value="1"/>
</dbReference>
<dbReference type="Gene3D" id="1.10.8.10">
    <property type="entry name" value="DNA helicase RuvA subunit, C-terminal domain"/>
    <property type="match status" value="1"/>
</dbReference>
<dbReference type="Gene3D" id="3.30.479.20">
    <property type="entry name" value="Elongation factor Ts, dimerisation domain"/>
    <property type="match status" value="2"/>
</dbReference>
<dbReference type="HAMAP" id="MF_00050">
    <property type="entry name" value="EF_Ts"/>
    <property type="match status" value="1"/>
</dbReference>
<dbReference type="InterPro" id="IPR036402">
    <property type="entry name" value="EF-Ts_dimer_sf"/>
</dbReference>
<dbReference type="InterPro" id="IPR001816">
    <property type="entry name" value="Transl_elong_EFTs/EF1B"/>
</dbReference>
<dbReference type="InterPro" id="IPR014039">
    <property type="entry name" value="Transl_elong_EFTs/EF1B_dimer"/>
</dbReference>
<dbReference type="InterPro" id="IPR018101">
    <property type="entry name" value="Transl_elong_Ts_CS"/>
</dbReference>
<dbReference type="InterPro" id="IPR009060">
    <property type="entry name" value="UBA-like_sf"/>
</dbReference>
<dbReference type="NCBIfam" id="TIGR00116">
    <property type="entry name" value="tsf"/>
    <property type="match status" value="1"/>
</dbReference>
<dbReference type="PANTHER" id="PTHR11741">
    <property type="entry name" value="ELONGATION FACTOR TS"/>
    <property type="match status" value="1"/>
</dbReference>
<dbReference type="PANTHER" id="PTHR11741:SF0">
    <property type="entry name" value="ELONGATION FACTOR TS, MITOCHONDRIAL"/>
    <property type="match status" value="1"/>
</dbReference>
<dbReference type="Pfam" id="PF00889">
    <property type="entry name" value="EF_TS"/>
    <property type="match status" value="1"/>
</dbReference>
<dbReference type="SUPFAM" id="SSF54713">
    <property type="entry name" value="Elongation factor Ts (EF-Ts), dimerisation domain"/>
    <property type="match status" value="2"/>
</dbReference>
<dbReference type="SUPFAM" id="SSF46934">
    <property type="entry name" value="UBA-like"/>
    <property type="match status" value="1"/>
</dbReference>
<dbReference type="PROSITE" id="PS01126">
    <property type="entry name" value="EF_TS_1"/>
    <property type="match status" value="1"/>
</dbReference>
<accession>Q165Z4</accession>
<proteinExistence type="inferred from homology"/>
<feature type="chain" id="PRO_1000006169" description="Elongation factor Ts">
    <location>
        <begin position="1"/>
        <end position="291"/>
    </location>
</feature>
<feature type="region of interest" description="Involved in Mg(2+) ion dislocation from EF-Tu" evidence="1">
    <location>
        <begin position="79"/>
        <end position="82"/>
    </location>
</feature>
<protein>
    <recommendedName>
        <fullName evidence="1">Elongation factor Ts</fullName>
        <shortName evidence="1">EF-Ts</shortName>
    </recommendedName>
</protein>
<keyword id="KW-0963">Cytoplasm</keyword>
<keyword id="KW-0251">Elongation factor</keyword>
<keyword id="KW-0648">Protein biosynthesis</keyword>
<keyword id="KW-1185">Reference proteome</keyword>
<comment type="function">
    <text evidence="1">Associates with the EF-Tu.GDP complex and induces the exchange of GDP to GTP. It remains bound to the aminoacyl-tRNA.EF-Tu.GTP complex up to the GTP hydrolysis stage on the ribosome.</text>
</comment>
<comment type="subcellular location">
    <subcellularLocation>
        <location evidence="1">Cytoplasm</location>
    </subcellularLocation>
</comment>
<comment type="similarity">
    <text evidence="1">Belongs to the EF-Ts family.</text>
</comment>
<sequence>MAITAAMVKELRDSTGAGMMDAKKALTENNGDMEAAVDWLRTKGLAKAAKKSGRTAAEGLVAVKVQGGHGVAVEVNSETDFVGKNADFQKMVAGIADVALGASDIDALRAADMGGKTVEQAVIDAVAVIGENMSVRRMSSIDGENVVSYVHNAAAPGMGKIGVLVATNGGDEAFGKQVAMHIAAVNPASLSEADLDPAVVEKEKQVQMDIARESGKPEQVIEKMIIGRMKKYMSEVTLLNQSFVVNPDLTVGDAAKEAGATITGFVRLEVGEGIEVVKEDFAAEVAKAVKG</sequence>
<reference key="1">
    <citation type="journal article" date="2007" name="J. Bacteriol.">
        <title>The complete genome sequence of Roseobacter denitrificans reveals a mixotrophic rather than photosynthetic metabolism.</title>
        <authorList>
            <person name="Swingley W.D."/>
            <person name="Sadekar S."/>
            <person name="Mastrian S.D."/>
            <person name="Matthies H.J."/>
            <person name="Hao J."/>
            <person name="Ramos H."/>
            <person name="Acharya C.R."/>
            <person name="Conrad A.L."/>
            <person name="Taylor H.L."/>
            <person name="Dejesa L.C."/>
            <person name="Shah M.K."/>
            <person name="O'Huallachain M.E."/>
            <person name="Lince M.T."/>
            <person name="Blankenship R.E."/>
            <person name="Beatty J.T."/>
            <person name="Touchman J.W."/>
        </authorList>
    </citation>
    <scope>NUCLEOTIDE SEQUENCE [LARGE SCALE GENOMIC DNA]</scope>
    <source>
        <strain>ATCC 33942 / OCh 114</strain>
    </source>
</reference>
<gene>
    <name evidence="1" type="primary">tsf</name>
    <name type="ordered locus">RD1_2652</name>
</gene>
<evidence type="ECO:0000255" key="1">
    <source>
        <dbReference type="HAMAP-Rule" id="MF_00050"/>
    </source>
</evidence>